<accession>P0A5Q3</accession>
<accession>A0A1R3Y1V1</accession>
<accession>O08224</accession>
<accession>P97175</accession>
<accession>X2BJC5</accession>
<proteinExistence type="inferred from homology"/>
<evidence type="ECO:0000250" key="1"/>
<sequence>MKLTTMIKTAVAVVAMAAIATFAAPVALAAYPITGKLGSELTMTDTVGQVVLGWKVSDLKSSTAVIPGYPVAGQVWEATATVNAIRGSVTPAVSQFNARTADGINYRVLWQAAGPDTISGATIPQGEQSTGKIYFDVTGPSPTIVAMNNGMEDLLIWEP</sequence>
<gene>
    <name type="primary">mpb63</name>
    <name type="ordered locus">BQ2027_MB1961C</name>
</gene>
<protein>
    <recommendedName>
        <fullName>Immunogenic protein MPB63</fullName>
    </recommendedName>
    <alternativeName>
        <fullName>16 kDa immunoprotective extracellular protein</fullName>
    </alternativeName>
    <alternativeName>
        <fullName>Antigen MPB63</fullName>
    </alternativeName>
</protein>
<feature type="signal peptide" evidence="1">
    <location>
        <begin position="1"/>
        <end position="29"/>
    </location>
</feature>
<feature type="chain" id="PRO_0000021735" description="Immunogenic protein MPB63">
    <location>
        <begin position="30"/>
        <end position="159"/>
    </location>
</feature>
<reference key="1">
    <citation type="submission" date="2000-09" db="EMBL/GenBank/DDBJ databases">
        <authorList>
            <person name="Kamiie K."/>
            <person name="Matsuda S."/>
            <person name="Kobayashi A."/>
            <person name="Kobayashi K."/>
        </authorList>
    </citation>
    <scope>NUCLEOTIDE SEQUENCE [GENOMIC DNA]</scope>
    <source>
        <strain>BCG / Tokyo</strain>
    </source>
</reference>
<reference key="2">
    <citation type="journal article" date="2003" name="Proc. Natl. Acad. Sci. U.S.A.">
        <title>The complete genome sequence of Mycobacterium bovis.</title>
        <authorList>
            <person name="Garnier T."/>
            <person name="Eiglmeier K."/>
            <person name="Camus J.-C."/>
            <person name="Medina N."/>
            <person name="Mansoor H."/>
            <person name="Pryor M."/>
            <person name="Duthoy S."/>
            <person name="Grondin S."/>
            <person name="Lacroix C."/>
            <person name="Monsempe C."/>
            <person name="Simon S."/>
            <person name="Harris B."/>
            <person name="Atkin R."/>
            <person name="Doggett J."/>
            <person name="Mayes R."/>
            <person name="Keating L."/>
            <person name="Wheeler P.R."/>
            <person name="Parkhill J."/>
            <person name="Barrell B.G."/>
            <person name="Cole S.T."/>
            <person name="Gordon S.V."/>
            <person name="Hewinson R.G."/>
        </authorList>
    </citation>
    <scope>NUCLEOTIDE SEQUENCE [LARGE SCALE GENOMIC DNA]</scope>
    <source>
        <strain>ATCC BAA-935 / AF2122/97</strain>
    </source>
</reference>
<reference key="3">
    <citation type="journal article" date="2017" name="Genome Announc.">
        <title>Updated reference genome sequence and annotation of Mycobacterium bovis AF2122/97.</title>
        <authorList>
            <person name="Malone K.M."/>
            <person name="Farrell D."/>
            <person name="Stuber T.P."/>
            <person name="Schubert O.T."/>
            <person name="Aebersold R."/>
            <person name="Robbe-Austerman S."/>
            <person name="Gordon S.V."/>
        </authorList>
    </citation>
    <scope>NUCLEOTIDE SEQUENCE [LARGE SCALE GENOMIC DNA]</scope>
    <scope>GENOME REANNOTATION</scope>
    <source>
        <strain>ATCC BAA-935 / AF2122/97</strain>
    </source>
</reference>
<organism>
    <name type="scientific">Mycobacterium bovis (strain ATCC BAA-935 / AF2122/97)</name>
    <dbReference type="NCBI Taxonomy" id="233413"/>
    <lineage>
        <taxon>Bacteria</taxon>
        <taxon>Bacillati</taxon>
        <taxon>Actinomycetota</taxon>
        <taxon>Actinomycetes</taxon>
        <taxon>Mycobacteriales</taxon>
        <taxon>Mycobacteriaceae</taxon>
        <taxon>Mycobacterium</taxon>
        <taxon>Mycobacterium tuberculosis complex</taxon>
    </lineage>
</organism>
<comment type="subcellular location">
    <subcellularLocation>
        <location evidence="1">Secreted</location>
    </subcellularLocation>
</comment>
<keyword id="KW-1185">Reference proteome</keyword>
<keyword id="KW-0964">Secreted</keyword>
<keyword id="KW-0732">Signal</keyword>
<name>MP63_MYCBO</name>
<dbReference type="EMBL" id="AB048799">
    <property type="protein sequence ID" value="BAB39210.1"/>
    <property type="molecule type" value="Genomic_DNA"/>
</dbReference>
<dbReference type="EMBL" id="LT708304">
    <property type="protein sequence ID" value="SIU00564.1"/>
    <property type="molecule type" value="Genomic_DNA"/>
</dbReference>
<dbReference type="RefSeq" id="NP_855611.1">
    <property type="nucleotide sequence ID" value="NC_002945.3"/>
</dbReference>
<dbReference type="SMR" id="P0A5Q3"/>
<dbReference type="KEGG" id="mbo:BQ2027_MB1961C"/>
<dbReference type="PATRIC" id="fig|233413.5.peg.2152"/>
<dbReference type="Proteomes" id="UP000001419">
    <property type="component" value="Chromosome"/>
</dbReference>
<dbReference type="GO" id="GO:0005615">
    <property type="term" value="C:extracellular space"/>
    <property type="evidence" value="ECO:0007669"/>
    <property type="project" value="InterPro"/>
</dbReference>
<dbReference type="FunFam" id="2.60.40.1240:FF:000001">
    <property type="entry name" value="Immunogenic protein MPT63"/>
    <property type="match status" value="1"/>
</dbReference>
<dbReference type="Gene3D" id="2.60.40.1240">
    <property type="match status" value="1"/>
</dbReference>
<dbReference type="InterPro" id="IPR029050">
    <property type="entry name" value="Immunoprotect_excell_Ig-like"/>
</dbReference>
<dbReference type="InterPro" id="IPR015250">
    <property type="entry name" value="MPT63-like"/>
</dbReference>
<dbReference type="Pfam" id="PF09167">
    <property type="entry name" value="DUF1942"/>
    <property type="match status" value="1"/>
</dbReference>
<dbReference type="SUPFAM" id="SSF81982">
    <property type="entry name" value="Antigen MPT63/MPB63 (immunoprotective extracellular protein)"/>
    <property type="match status" value="1"/>
</dbReference>